<comment type="similarity">
    <text evidence="1">Belongs to the SfsA family.</text>
</comment>
<evidence type="ECO:0000255" key="1">
    <source>
        <dbReference type="HAMAP-Rule" id="MF_00095"/>
    </source>
</evidence>
<keyword id="KW-1185">Reference proteome</keyword>
<reference key="1">
    <citation type="journal article" date="2010" name="ISME J.">
        <title>The complete genome sequence of the algal symbiont Dinoroseobacter shibae: a hitchhiker's guide to life in the sea.</title>
        <authorList>
            <person name="Wagner-Dobler I."/>
            <person name="Ballhausen B."/>
            <person name="Berger M."/>
            <person name="Brinkhoff T."/>
            <person name="Buchholz I."/>
            <person name="Bunk B."/>
            <person name="Cypionka H."/>
            <person name="Daniel R."/>
            <person name="Drepper T."/>
            <person name="Gerdts G."/>
            <person name="Hahnke S."/>
            <person name="Han C."/>
            <person name="Jahn D."/>
            <person name="Kalhoefer D."/>
            <person name="Kiss H."/>
            <person name="Klenk H.P."/>
            <person name="Kyrpides N."/>
            <person name="Liebl W."/>
            <person name="Liesegang H."/>
            <person name="Meincke L."/>
            <person name="Pati A."/>
            <person name="Petersen J."/>
            <person name="Piekarski T."/>
            <person name="Pommerenke C."/>
            <person name="Pradella S."/>
            <person name="Pukall R."/>
            <person name="Rabus R."/>
            <person name="Stackebrandt E."/>
            <person name="Thole S."/>
            <person name="Thompson L."/>
            <person name="Tielen P."/>
            <person name="Tomasch J."/>
            <person name="von Jan M."/>
            <person name="Wanphrut N."/>
            <person name="Wichels A."/>
            <person name="Zech H."/>
            <person name="Simon M."/>
        </authorList>
    </citation>
    <scope>NUCLEOTIDE SEQUENCE [LARGE SCALE GENOMIC DNA]</scope>
    <source>
        <strain>DSM 16493 / NCIMB 14021 / DFL 12</strain>
    </source>
</reference>
<accession>A8LKM4</accession>
<sequence>MRFQTPLVPARLVRRYNRFLSDAVLEDTGEEVRAHCPNPGAMLGLKDAGQRIWLEPNDDPKKKLRYGWRLVELADGHMAGIDTSVPNKVVGEALAARAITELAAYGTIRAEVKYGTNSRVDFLATEPGLPDTYVEVKNVHLRRAEDWAEFPDSVTTRGAKHLAELARMVEAGHRAVMLYLVQRTDCTRLRLAPDLDPSYARAFDAARATGVEMLCYGTLIDTGGVTLGRALPVDPAAQAPQNED</sequence>
<gene>
    <name evidence="1" type="primary">sfsA</name>
    <name type="ordered locus">Dshi_0118</name>
</gene>
<feature type="chain" id="PRO_1000075539" description="Sugar fermentation stimulation protein homolog">
    <location>
        <begin position="1"/>
        <end position="244"/>
    </location>
</feature>
<dbReference type="EMBL" id="CP000830">
    <property type="protein sequence ID" value="ABV91867.1"/>
    <property type="molecule type" value="Genomic_DNA"/>
</dbReference>
<dbReference type="RefSeq" id="WP_012176800.1">
    <property type="nucleotide sequence ID" value="NC_009952.1"/>
</dbReference>
<dbReference type="SMR" id="A8LKM4"/>
<dbReference type="STRING" id="398580.Dshi_0118"/>
<dbReference type="KEGG" id="dsh:Dshi_0118"/>
<dbReference type="eggNOG" id="COG1489">
    <property type="taxonomic scope" value="Bacteria"/>
</dbReference>
<dbReference type="HOGENOM" id="CLU_052299_2_0_5"/>
<dbReference type="OrthoDB" id="9802365at2"/>
<dbReference type="Proteomes" id="UP000006833">
    <property type="component" value="Chromosome"/>
</dbReference>
<dbReference type="GO" id="GO:0003677">
    <property type="term" value="F:DNA binding"/>
    <property type="evidence" value="ECO:0007669"/>
    <property type="project" value="InterPro"/>
</dbReference>
<dbReference type="CDD" id="cd22359">
    <property type="entry name" value="SfsA-like_bacterial"/>
    <property type="match status" value="1"/>
</dbReference>
<dbReference type="Gene3D" id="2.40.50.580">
    <property type="match status" value="1"/>
</dbReference>
<dbReference type="Gene3D" id="3.40.1350.60">
    <property type="match status" value="1"/>
</dbReference>
<dbReference type="HAMAP" id="MF_00095">
    <property type="entry name" value="SfsA"/>
    <property type="match status" value="1"/>
</dbReference>
<dbReference type="InterPro" id="IPR005224">
    <property type="entry name" value="SfsA"/>
</dbReference>
<dbReference type="InterPro" id="IPR040452">
    <property type="entry name" value="SfsA_C"/>
</dbReference>
<dbReference type="InterPro" id="IPR041465">
    <property type="entry name" value="SfsA_N"/>
</dbReference>
<dbReference type="NCBIfam" id="TIGR00230">
    <property type="entry name" value="sfsA"/>
    <property type="match status" value="1"/>
</dbReference>
<dbReference type="PANTHER" id="PTHR30545">
    <property type="entry name" value="SUGAR FERMENTATION STIMULATION PROTEIN A"/>
    <property type="match status" value="1"/>
</dbReference>
<dbReference type="PANTHER" id="PTHR30545:SF2">
    <property type="entry name" value="SUGAR FERMENTATION STIMULATION PROTEIN A"/>
    <property type="match status" value="1"/>
</dbReference>
<dbReference type="Pfam" id="PF03749">
    <property type="entry name" value="SfsA"/>
    <property type="match status" value="1"/>
</dbReference>
<dbReference type="Pfam" id="PF17746">
    <property type="entry name" value="SfsA_N"/>
    <property type="match status" value="1"/>
</dbReference>
<name>SFSA_DINSH</name>
<protein>
    <recommendedName>
        <fullName evidence="1">Sugar fermentation stimulation protein homolog</fullName>
    </recommendedName>
</protein>
<proteinExistence type="inferred from homology"/>
<organism>
    <name type="scientific">Dinoroseobacter shibae (strain DSM 16493 / NCIMB 14021 / DFL 12)</name>
    <dbReference type="NCBI Taxonomy" id="398580"/>
    <lineage>
        <taxon>Bacteria</taxon>
        <taxon>Pseudomonadati</taxon>
        <taxon>Pseudomonadota</taxon>
        <taxon>Alphaproteobacteria</taxon>
        <taxon>Rhodobacterales</taxon>
        <taxon>Roseobacteraceae</taxon>
        <taxon>Dinoroseobacter</taxon>
    </lineage>
</organism>